<organism>
    <name type="scientific">Aspergillus versicolor</name>
    <dbReference type="NCBI Taxonomy" id="46472"/>
    <lineage>
        <taxon>Eukaryota</taxon>
        <taxon>Fungi</taxon>
        <taxon>Dikarya</taxon>
        <taxon>Ascomycota</taxon>
        <taxon>Pezizomycotina</taxon>
        <taxon>Eurotiomycetes</taxon>
        <taxon>Eurotiomycetidae</taxon>
        <taxon>Eurotiales</taxon>
        <taxon>Aspergillaceae</taxon>
        <taxon>Aspergillus</taxon>
        <taxon>Aspergillus subgen. Nidulantes</taxon>
    </lineage>
</organism>
<proteinExistence type="evidence at protein level"/>
<keyword id="KW-0325">Glycoprotein</keyword>
<keyword id="KW-0732">Signal</keyword>
<protein>
    <recommendedName>
        <fullName evidence="6">Notoamide biosynthesis cluster protein J'</fullName>
    </recommendedName>
</protein>
<gene>
    <name evidence="6" type="primary">notJ'</name>
</gene>
<accession>L7WU85</accession>
<reference key="1">
    <citation type="journal article" date="2012" name="Med. Chem. Commun.">
        <title>Comparative analysis of the biosynthetic systems for fungal bicyclo[2.2.2]diazaoctane indole alkaloids: the (+)/(-)-notoamide, paraherquamide and malbrancheamide pathways.</title>
        <authorList>
            <person name="Li S."/>
            <person name="Anand K."/>
            <person name="Tran H."/>
            <person name="Yu F."/>
            <person name="Finefield J.M."/>
            <person name="Sunderhaus J.D."/>
            <person name="McAfoos T.J."/>
            <person name="Tsukamoto S."/>
            <person name="Williams R.M."/>
            <person name="Sherman D.H."/>
        </authorList>
    </citation>
    <scope>NUCLEOTIDE SEQUENCE [GENOMIC DNA]</scope>
    <source>
        <strain>NRRL 35600</strain>
    </source>
</reference>
<reference key="2">
    <citation type="journal article" date="2007" name="Angew. Chem. Int. Ed.">
        <title>Notoamides A-D: prenylated indole alkaloids isolated from a marine-derived fungus, Aspergillus sp.</title>
        <authorList>
            <person name="Kato H."/>
            <person name="Yoshida T."/>
            <person name="Tokue T."/>
            <person name="Nojiri Y."/>
            <person name="Hirota H."/>
            <person name="Ohta T."/>
            <person name="Williams R.M."/>
            <person name="Tsukamoto S."/>
        </authorList>
    </citation>
    <scope>BIOTECHNOLOGY</scope>
</reference>
<reference key="3">
    <citation type="journal article" date="2013" name="Appl. Microbiol. Biotechnol.">
        <title>Identification of a brevianamide F reverse prenyltransferase BrePT from Aspergillus versicolor with a broad substrate specificity towards tryptophan-containing cyclic dipeptides.</title>
        <authorList>
            <person name="Yin S."/>
            <person name="Yu X."/>
            <person name="Wang Q."/>
            <person name="Liu X.Q."/>
            <person name="Li S.M."/>
        </authorList>
    </citation>
    <scope>FUNCTION</scope>
</reference>
<dbReference type="EMBL" id="JQ708194">
    <property type="protein sequence ID" value="AGC83581.1"/>
    <property type="molecule type" value="Genomic_DNA"/>
</dbReference>
<dbReference type="SMR" id="L7WU85"/>
<dbReference type="GlyCosmos" id="L7WU85">
    <property type="glycosylation" value="4 sites, No reported glycans"/>
</dbReference>
<dbReference type="InterPro" id="IPR025442">
    <property type="entry name" value="DUF4185"/>
</dbReference>
<dbReference type="InterPro" id="IPR023296">
    <property type="entry name" value="Glyco_hydro_beta-prop_sf"/>
</dbReference>
<dbReference type="Pfam" id="PF13810">
    <property type="entry name" value="DUF4185"/>
    <property type="match status" value="1"/>
</dbReference>
<dbReference type="SUPFAM" id="SSF75005">
    <property type="entry name" value="Arabinanase/levansucrase/invertase"/>
    <property type="match status" value="1"/>
</dbReference>
<comment type="function">
    <text evidence="4 5 7">Part of the gene cluster that mediates the biosynthesis of notoamide, a fungal indole alkaloid that belongs to a family of natural products containing a characteristic bicyclo[2.2.2]diazaoctane core (PubMed:23213353). The first step of notoamide biosynthesis involves coupling of L-proline and L-tryptophan by the bimodular NRPS notE', to produce cyclo-L-tryptophan-L-proline called brevianamide F (Probable). The reverse prenyltransferase notF' then acts as a deoxybrevianamide E synthase and converts brevianamide F to deoxybrevianamide E via reverse prenylation at C-2 of the indole ring leading to the bicyclo[2.2.2]diazaoctane core (Probable) (PubMed:22660767). Deoxybrevianamide E is further hydroxylated at C-6 of the indole ring, likely catalyzed by the cytochrome P450 monooxygenase notG', to yield 6-hydroxy-deoxybrevianamide E (Probable). 6-hydroxy-deoxybrevianamide E is a specific substrate of the prenyltransferase notC' for normal prenylation at C-7 to produce 6-hydroxy-7-prenyl-deoxybrevianamide, also called notoamide S (Probable). As the proposed pivotal branching point in notoamide biosynthesis, notoamide S can be diverted to notoamide E through an oxidative pyran ring closure putatively catalyzed by either notH' cytochrome P450 monooxygenase or the notD' FAD-linked oxidoreductase (Probable). This step would be followed by an indole 2,3-epoxidation-initiated pinacol-like rearrangement catalyzed by the notB' FAD-dependent monooxygenase leading to the formation of notoamide C and notoamide D (Probable). On the other hand notoamide S is converted to notoamide T by notH' (or notD'), a bifunctional oxidase that also functions as the intramolecular Diels-Alderase responsible for generation of (-)-notoamide T (Probable). To generate antipodal (+)-notoaminide T, notH (or notD) in Aspergillus strain MF297-2 is expected to catalyze a Diels-Alder reaction leading to the opposite stereochemistry (Probable). The remaining oxidoreductase notD' (or notH') likely catalyzes the oxidative pyran ring formation to yield (-)-stephacidin A (Probable). The FAD-dependent monooxygenase notI' is highly similar to notB' and is predicted to catalyze a similar conversion from (-)-stephacidin A to (+)-notoamide B via the 2,3-epoxidation of (-)-stephacidin A followed by a pinacol-type rearrangement (Probable). Finally, it remains unclear which enzyme could be responsible for the final hydroxylation steps leading to notoamide A and sclerotiamide (Probable). The function of notJ' in the notoamide biosynthesis has not been determined yet (Probable).</text>
</comment>
<comment type="biotechnology">
    <text evidence="3">Notoamides have been shown to exhibit antitumoral activities (PubMed:17304611). Notoamides A-C show moderate cytotoxicity against HeLa and L1210 cells with IC(50) values in the range of 22-52 mg/ml, but the IC(50) value of notoamide D is greater than 100 mg/ml (PubMed:17304611). Moreover, notoamide C induces G2/M-cell cycle arrest at a concentration of 6.3 mg/ml (PubMed:17304611).</text>
</comment>
<name>NOTJ_ASPVE</name>
<sequence>MRNMATMLHLLTLILLTSPASTQTANAVPKRRLIGEDRESGRRWGVAATDLGIPYDMHNGQVGYLFGDTVSTMWVQEAKDLRSPVMLLSGIHPGEDGGIFFESAAGVDGDGLAPRLFYNGDHGDDGTGTWEFTVLPNDGISFPETGEHIISYTSIMNFTTSWTPNYAGLAYSTDGNSFSRLPTKWLNNDNNTDPFQMWTMQRDGDWVYVFTVRCARQYGPMMLQRVPWDKMTDKTEYQGWGWNGEDWGWQRPCSPILDGYFGEPSVRRLQDGTWAMVYLNASTSTPHIVSRTARGPTGPWSEETVQVNQAGDESLLYGGFIHPWSTGERNQLYLMVSNWTSTSDAAPTPEGLVSVSQFTGTL</sequence>
<evidence type="ECO:0000255" key="1"/>
<evidence type="ECO:0000255" key="2">
    <source>
        <dbReference type="PROSITE-ProRule" id="PRU00498"/>
    </source>
</evidence>
<evidence type="ECO:0000269" key="3">
    <source>
    </source>
</evidence>
<evidence type="ECO:0000269" key="4">
    <source>
    </source>
</evidence>
<evidence type="ECO:0000269" key="5">
    <source>
    </source>
</evidence>
<evidence type="ECO:0000303" key="6">
    <source>
    </source>
</evidence>
<evidence type="ECO:0000305" key="7">
    <source>
    </source>
</evidence>
<feature type="signal peptide" evidence="1">
    <location>
        <begin position="1"/>
        <end position="22"/>
    </location>
</feature>
<feature type="chain" id="PRO_5003985637" description="Notoamide biosynthesis cluster protein J'">
    <location>
        <begin position="23"/>
        <end position="362"/>
    </location>
</feature>
<feature type="glycosylation site" description="N-linked (GlcNAc...) asparagine" evidence="2">
    <location>
        <position position="157"/>
    </location>
</feature>
<feature type="glycosylation site" description="N-linked (GlcNAc...) asparagine" evidence="2">
    <location>
        <position position="190"/>
    </location>
</feature>
<feature type="glycosylation site" description="N-linked (GlcNAc...) asparagine" evidence="2">
    <location>
        <position position="280"/>
    </location>
</feature>
<feature type="glycosylation site" description="N-linked (GlcNAc...) asparagine" evidence="2">
    <location>
        <position position="338"/>
    </location>
</feature>